<reference key="1">
    <citation type="journal article" date="2004" name="PLoS Biol.">
        <title>Phylogenomics of the reproductive parasite Wolbachia pipientis wMel: a streamlined genome overrun by mobile genetic elements.</title>
        <authorList>
            <person name="Wu M."/>
            <person name="Sun L.V."/>
            <person name="Vamathevan J.J."/>
            <person name="Riegler M."/>
            <person name="DeBoy R.T."/>
            <person name="Brownlie J.C."/>
            <person name="McGraw E.A."/>
            <person name="Martin W."/>
            <person name="Esser C."/>
            <person name="Ahmadinejad N."/>
            <person name="Wiegand C."/>
            <person name="Madupu R."/>
            <person name="Beanan M.J."/>
            <person name="Brinkac L.M."/>
            <person name="Daugherty S.C."/>
            <person name="Durkin A.S."/>
            <person name="Kolonay J.F."/>
            <person name="Nelson W.C."/>
            <person name="Mohamoud Y."/>
            <person name="Lee P."/>
            <person name="Berry K.J."/>
            <person name="Young M.B."/>
            <person name="Utterback T.R."/>
            <person name="Weidman J.F."/>
            <person name="Nierman W.C."/>
            <person name="Paulsen I.T."/>
            <person name="Nelson K.E."/>
            <person name="Tettelin H."/>
            <person name="O'Neill S.L."/>
            <person name="Eisen J.A."/>
        </authorList>
    </citation>
    <scope>NUCLEOTIDE SEQUENCE [LARGE SCALE GENOMIC DNA]</scope>
</reference>
<keyword id="KW-0240">DNA-directed RNA polymerase</keyword>
<keyword id="KW-0548">Nucleotidyltransferase</keyword>
<keyword id="KW-0804">Transcription</keyword>
<keyword id="KW-0808">Transferase</keyword>
<dbReference type="EC" id="2.7.7.6" evidence="1"/>
<dbReference type="EMBL" id="AE017196">
    <property type="protein sequence ID" value="AAS14945.1"/>
    <property type="molecule type" value="Genomic_DNA"/>
</dbReference>
<dbReference type="RefSeq" id="WP_007548528.1">
    <property type="nucleotide sequence ID" value="NZ_OX384529.1"/>
</dbReference>
<dbReference type="SMR" id="Q73FM5"/>
<dbReference type="EnsemblBacteria" id="AAS14945">
    <property type="protein sequence ID" value="AAS14945"/>
    <property type="gene ID" value="WD_1303"/>
</dbReference>
<dbReference type="GeneID" id="70036767"/>
<dbReference type="KEGG" id="wol:WD_1303"/>
<dbReference type="eggNOG" id="COG1758">
    <property type="taxonomic scope" value="Bacteria"/>
</dbReference>
<dbReference type="Proteomes" id="UP000008215">
    <property type="component" value="Chromosome"/>
</dbReference>
<dbReference type="GO" id="GO:0000428">
    <property type="term" value="C:DNA-directed RNA polymerase complex"/>
    <property type="evidence" value="ECO:0007669"/>
    <property type="project" value="UniProtKB-KW"/>
</dbReference>
<dbReference type="GO" id="GO:0003677">
    <property type="term" value="F:DNA binding"/>
    <property type="evidence" value="ECO:0007669"/>
    <property type="project" value="UniProtKB-UniRule"/>
</dbReference>
<dbReference type="GO" id="GO:0003899">
    <property type="term" value="F:DNA-directed RNA polymerase activity"/>
    <property type="evidence" value="ECO:0007669"/>
    <property type="project" value="UniProtKB-UniRule"/>
</dbReference>
<dbReference type="GO" id="GO:0006351">
    <property type="term" value="P:DNA-templated transcription"/>
    <property type="evidence" value="ECO:0007669"/>
    <property type="project" value="UniProtKB-UniRule"/>
</dbReference>
<dbReference type="Gene3D" id="3.90.940.10">
    <property type="match status" value="1"/>
</dbReference>
<dbReference type="HAMAP" id="MF_00366">
    <property type="entry name" value="RNApol_bact_RpoZ"/>
    <property type="match status" value="1"/>
</dbReference>
<dbReference type="InterPro" id="IPR003716">
    <property type="entry name" value="DNA-dir_RNA_pol_omega"/>
</dbReference>
<dbReference type="InterPro" id="IPR006110">
    <property type="entry name" value="Pol_omega/Rpo6/RPB6"/>
</dbReference>
<dbReference type="InterPro" id="IPR036161">
    <property type="entry name" value="RPB6/omega-like_sf"/>
</dbReference>
<dbReference type="NCBIfam" id="TIGR00690">
    <property type="entry name" value="rpoZ"/>
    <property type="match status" value="1"/>
</dbReference>
<dbReference type="PANTHER" id="PTHR34476">
    <property type="entry name" value="DNA-DIRECTED RNA POLYMERASE SUBUNIT OMEGA"/>
    <property type="match status" value="1"/>
</dbReference>
<dbReference type="PANTHER" id="PTHR34476:SF1">
    <property type="entry name" value="DNA-DIRECTED RNA POLYMERASE SUBUNIT OMEGA"/>
    <property type="match status" value="1"/>
</dbReference>
<dbReference type="Pfam" id="PF01192">
    <property type="entry name" value="RNA_pol_Rpb6"/>
    <property type="match status" value="1"/>
</dbReference>
<dbReference type="SMART" id="SM01409">
    <property type="entry name" value="RNA_pol_Rpb6"/>
    <property type="match status" value="1"/>
</dbReference>
<dbReference type="SUPFAM" id="SSF63562">
    <property type="entry name" value="RPB6/omega subunit-like"/>
    <property type="match status" value="1"/>
</dbReference>
<evidence type="ECO:0000255" key="1">
    <source>
        <dbReference type="HAMAP-Rule" id="MF_00366"/>
    </source>
</evidence>
<evidence type="ECO:0000256" key="2">
    <source>
        <dbReference type="SAM" id="MobiDB-lite"/>
    </source>
</evidence>
<feature type="chain" id="PRO_0000237528" description="DNA-directed RNA polymerase subunit omega">
    <location>
        <begin position="1"/>
        <end position="135"/>
    </location>
</feature>
<feature type="region of interest" description="Disordered" evidence="2">
    <location>
        <begin position="107"/>
        <end position="135"/>
    </location>
</feature>
<feature type="compositionally biased region" description="Acidic residues" evidence="2">
    <location>
        <begin position="112"/>
        <end position="135"/>
    </location>
</feature>
<gene>
    <name evidence="1" type="primary">rpoZ</name>
    <name type="ordered locus">WD_1303</name>
</gene>
<protein>
    <recommendedName>
        <fullName evidence="1">DNA-directed RNA polymerase subunit omega</fullName>
        <shortName evidence="1">RNAP omega subunit</shortName>
        <ecNumber evidence="1">2.7.7.6</ecNumber>
    </recommendedName>
    <alternativeName>
        <fullName evidence="1">RNA polymerase omega subunit</fullName>
    </alternativeName>
    <alternativeName>
        <fullName evidence="1">Transcriptase subunit omega</fullName>
    </alternativeName>
</protein>
<comment type="function">
    <text evidence="1">Promotes RNA polymerase assembly. Latches the N- and C-terminal regions of the beta' subunit thereby facilitating its interaction with the beta and alpha subunits.</text>
</comment>
<comment type="catalytic activity">
    <reaction evidence="1">
        <text>RNA(n) + a ribonucleoside 5'-triphosphate = RNA(n+1) + diphosphate</text>
        <dbReference type="Rhea" id="RHEA:21248"/>
        <dbReference type="Rhea" id="RHEA-COMP:14527"/>
        <dbReference type="Rhea" id="RHEA-COMP:17342"/>
        <dbReference type="ChEBI" id="CHEBI:33019"/>
        <dbReference type="ChEBI" id="CHEBI:61557"/>
        <dbReference type="ChEBI" id="CHEBI:140395"/>
        <dbReference type="EC" id="2.7.7.6"/>
    </reaction>
</comment>
<comment type="subunit">
    <text evidence="1">The RNAP catalytic core consists of 2 alpha, 1 beta, 1 beta' and 1 omega subunit. When a sigma factor is associated with the core the holoenzyme is formed, which can initiate transcription.</text>
</comment>
<comment type="similarity">
    <text evidence="1">Belongs to the RNA polymerase subunit omega family.</text>
</comment>
<organism>
    <name type="scientific">Wolbachia pipientis wMel</name>
    <dbReference type="NCBI Taxonomy" id="163164"/>
    <lineage>
        <taxon>Bacteria</taxon>
        <taxon>Pseudomonadati</taxon>
        <taxon>Pseudomonadota</taxon>
        <taxon>Alphaproteobacteria</taxon>
        <taxon>Rickettsiales</taxon>
        <taxon>Anaplasmataceae</taxon>
        <taxon>Wolbachieae</taxon>
        <taxon>Wolbachia</taxon>
    </lineage>
</organism>
<accession>Q73FM5</accession>
<name>RPOZ_WOLPM</name>
<proteinExistence type="inferred from homology"/>
<sequence>MAESIVEKCIERVSNRFKLVLLASQRTHDLNTGASNPIQAAKFKGHKNTIVSLHEIAGKQVDTHELFSLLVGRCKEYMKGNMNNVYSSNTSKLANLLNFSDNTDLDASQESQDYEVDGEIDDEINDQDGDEEVSV</sequence>